<sequence>MVRVKVNDRIVEVPPGTSVMDAVFHAGYDVPLFCSEKHLSPIGACRMCLVRIGLPKKGPDGKPLLNEKGEPEIQWQPKLAASCVTAVADGMVVDTLSDVVREAQAGMVEFTLLNHPLDCPTCDKGGACELQDRTVEYGLYEKYYQKGPLELPVYTRFEFTRRHVDKHHPLSPFVILDRERCIHCKRCVRYFEEVPGDEVLDFIERGVHTFIGTMDFGLPSGFSGNITDICPVGALLDLTARFRARNWEMEETPTTCALCPVGCGITADTRSGELLRIRAREVPEVNEIWICDAGRFGHEWADQNRLKTPLVRKEGRLVEATWEEAFLALKEGLKEARGEEVGLYLAHDATLEEGLLASELAKALKTPHLDFQGRTAAPASLFPPASLEDLLQADFALVLGDPTEEAPILHLRLSEFVRDLKPPHRYNHGTPFADLQIKERMPRRTDKMALFAPYRAPLMKWAAIHEVHRPGEEREILLALLGDKEGSEMVAKAKEAWEKAKNPVLILGAGVLQDTVAAERARLLAERKGAKVLAMTPAANARGLEAMGVLPGAKGASWDEPGALYAYYGFVPPEEALKGKRFVVMHLSHLHPLAERYAHVVLPAPTFYEKRGHLVNLEGRVLPLSPAPIENGEAEGALQVLALLAEALGVRPPFRLHLEAQKALKARKVPEAMGRLSFRLKELRPKERKGAFYLRPTMWKAHQAVGKAQEAARAELWAHPETARAEALPEGAQVAVETPFGRVEARVVHREDVPKGHLYLSALGPAAGLRVEGRVLVPAGGEA</sequence>
<evidence type="ECO:0000255" key="1">
    <source>
        <dbReference type="PROSITE-ProRule" id="PRU00465"/>
    </source>
</evidence>
<evidence type="ECO:0000255" key="2">
    <source>
        <dbReference type="PROSITE-ProRule" id="PRU01004"/>
    </source>
</evidence>
<evidence type="ECO:0000255" key="3">
    <source>
        <dbReference type="PROSITE-ProRule" id="PRU01184"/>
    </source>
</evidence>
<evidence type="ECO:0000269" key="4">
    <source>
    </source>
</evidence>
<evidence type="ECO:0000269" key="5">
    <source>
    </source>
</evidence>
<evidence type="ECO:0000269" key="6">
    <source>
    </source>
</evidence>
<evidence type="ECO:0000305" key="7"/>
<evidence type="ECO:0000305" key="8">
    <source>
    </source>
</evidence>
<evidence type="ECO:0007829" key="9">
    <source>
        <dbReference type="PDB" id="2FUG"/>
    </source>
</evidence>
<evidence type="ECO:0007829" key="10">
    <source>
        <dbReference type="PDB" id="3I9V"/>
    </source>
</evidence>
<evidence type="ECO:0007829" key="11">
    <source>
        <dbReference type="PDB" id="3IAM"/>
    </source>
</evidence>
<evidence type="ECO:0007829" key="12">
    <source>
        <dbReference type="PDB" id="6I1P"/>
    </source>
</evidence>
<evidence type="ECO:0007829" key="13">
    <source>
        <dbReference type="PDB" id="6Q8W"/>
    </source>
</evidence>
<evidence type="ECO:0007829" key="14">
    <source>
        <dbReference type="PDB" id="6Y11"/>
    </source>
</evidence>
<reference key="1">
    <citation type="journal article" date="1997" name="J. Biol. Chem.">
        <title>The proton-translocating NADH-quinone oxidoreductase (NDH-1) of thermophilic bacterium Thermus thermophilus HB-8. Complete DNA sequence of the gene cluster and thermostable properties of the expressed NQO2 subunit.</title>
        <authorList>
            <person name="Yano T."/>
            <person name="Chu S.S."/>
            <person name="Sled' V.D."/>
            <person name="Ohnishi T."/>
            <person name="Yagi T."/>
        </authorList>
    </citation>
    <scope>NUCLEOTIDE SEQUENCE [GENOMIC DNA]</scope>
    <source>
        <strain>ATCC 27634 / DSM 579 / HB8</strain>
    </source>
</reference>
<reference key="2">
    <citation type="submission" date="2004-11" db="EMBL/GenBank/DDBJ databases">
        <title>Complete genome sequence of Thermus thermophilus HB8.</title>
        <authorList>
            <person name="Masui R."/>
            <person name="Kurokawa K."/>
            <person name="Nakagawa N."/>
            <person name="Tokunaga F."/>
            <person name="Koyama Y."/>
            <person name="Shibata T."/>
            <person name="Oshima T."/>
            <person name="Yokoyama S."/>
            <person name="Yasunaga T."/>
            <person name="Kuramitsu S."/>
        </authorList>
    </citation>
    <scope>NUCLEOTIDE SEQUENCE [LARGE SCALE GENOMIC DNA]</scope>
    <source>
        <strain>ATCC 27634 / DSM 579 / HB8</strain>
    </source>
</reference>
<reference key="3">
    <citation type="journal article" date="2002" name="J. Biol. Chem.">
        <title>Characterization of the iron-sulfur cluster coordinated by a cysteine cluster motif (CXXCXXXCX27C) in the Nqo3 subunit in the proton-translocating NADH-quinone oxidoreductase (NDH-1) of Thermus thermophilus HB-8.</title>
        <authorList>
            <person name="Nakamaru-Ogiso E."/>
            <person name="Yano T."/>
            <person name="Ohnishi T."/>
            <person name="Yagi T."/>
        </authorList>
    </citation>
    <scope>EXPRESSION OF 240-324 FOR CHARACTERIZATION OF A FOURTH [4FE-4S] CENTER</scope>
    <scope>MUTAGENESIS OF CYS-256; CYS-259; CYS-263 AND CYS-291</scope>
</reference>
<reference key="4">
    <citation type="journal article" date="2006" name="Biochemistry">
        <title>Identification of a novel subunit of respiratory complex I from Thermus thermophilus.</title>
        <authorList>
            <person name="Hinchliffe P."/>
            <person name="Carroll J."/>
            <person name="Sazanov L.A."/>
        </authorList>
    </citation>
    <scope>PROTEIN SEQUENCE OF 1-8</scope>
    <scope>IDENTIFICATION BY MASS SPECTROMETRY</scope>
    <scope>FUNCTION</scope>
    <scope>EPR SPECTROSCOPY</scope>
    <scope>SUBUNIT</scope>
    <source>
        <strain>ATCC 27634 / DSM 579 / HB8</strain>
    </source>
</reference>
<reference key="5">
    <citation type="journal article" date="2006" name="Science">
        <title>Structure of the hydrophilic domain of respiratory complex I from Thermus thermophilus.</title>
        <authorList>
            <person name="Sazanov L.A."/>
            <person name="Hinchliffe P."/>
        </authorList>
    </citation>
    <scope>X-RAY CRYSTALLOGRAPHY (3.3 ANGSTROMS) OF ENZYME HYDROPHILIC DOMAIN IN COMPLEX WITH 2FE-2S AND 4FE-4S CLUSTER; MAG</scope>
    <scope>FUNCTION</scope>
    <scope>SUBUNIT</scope>
    <scope>SUBCELLULAR LOCATION</scope>
    <scope>DOMAIN</scope>
    <scope>ELECTRON TRANSFER MECHANISM</scope>
</reference>
<keyword id="KW-0001">2Fe-2S</keyword>
<keyword id="KW-0002">3D-structure</keyword>
<keyword id="KW-0004">4Fe-4S</keyword>
<keyword id="KW-1003">Cell membrane</keyword>
<keyword id="KW-0903">Direct protein sequencing</keyword>
<keyword id="KW-0408">Iron</keyword>
<keyword id="KW-0411">Iron-sulfur</keyword>
<keyword id="KW-0472">Membrane</keyword>
<keyword id="KW-0479">Metal-binding</keyword>
<keyword id="KW-0520">NAD</keyword>
<keyword id="KW-0874">Quinone</keyword>
<keyword id="KW-1185">Reference proteome</keyword>
<keyword id="KW-1278">Translocase</keyword>
<gene>
    <name type="primary">nqo3</name>
    <name type="ordered locus">TTHA0090</name>
</gene>
<proteinExistence type="evidence at protein level"/>
<dbReference type="EC" id="7.1.1.-"/>
<dbReference type="EMBL" id="U52917">
    <property type="protein sequence ID" value="AAA97944.1"/>
    <property type="molecule type" value="Genomic_DNA"/>
</dbReference>
<dbReference type="EMBL" id="AP008226">
    <property type="protein sequence ID" value="BAD69913.1"/>
    <property type="molecule type" value="Genomic_DNA"/>
</dbReference>
<dbReference type="PIR" id="T11904">
    <property type="entry name" value="T11904"/>
</dbReference>
<dbReference type="RefSeq" id="YP_143356.1">
    <property type="nucleotide sequence ID" value="NC_006461.1"/>
</dbReference>
<dbReference type="PDB" id="2FUG">
    <property type="method" value="X-ray"/>
    <property type="resolution" value="3.30 A"/>
    <property type="chains" value="3/C/L/U=1-783"/>
</dbReference>
<dbReference type="PDB" id="2YBB">
    <property type="method" value="EM"/>
    <property type="resolution" value="19.00 A"/>
    <property type="chains" value="3=1-783"/>
</dbReference>
<dbReference type="PDB" id="3I9V">
    <property type="method" value="X-ray"/>
    <property type="resolution" value="3.10 A"/>
    <property type="chains" value="3/C=1-783"/>
</dbReference>
<dbReference type="PDB" id="3IAM">
    <property type="method" value="X-ray"/>
    <property type="resolution" value="3.10 A"/>
    <property type="chains" value="3/C=1-783"/>
</dbReference>
<dbReference type="PDB" id="3IAS">
    <property type="method" value="X-ray"/>
    <property type="resolution" value="3.15 A"/>
    <property type="chains" value="3/C/L/U=1-783"/>
</dbReference>
<dbReference type="PDB" id="3M9S">
    <property type="method" value="X-ray"/>
    <property type="resolution" value="4.50 A"/>
    <property type="chains" value="3/C=1-783"/>
</dbReference>
<dbReference type="PDB" id="4HEA">
    <property type="method" value="X-ray"/>
    <property type="resolution" value="3.30 A"/>
    <property type="chains" value="3/D=1-783"/>
</dbReference>
<dbReference type="PDB" id="6I0D">
    <property type="method" value="X-ray"/>
    <property type="resolution" value="3.60 A"/>
    <property type="chains" value="3/D=1-783"/>
</dbReference>
<dbReference type="PDB" id="6I1P">
    <property type="method" value="X-ray"/>
    <property type="resolution" value="3.21 A"/>
    <property type="chains" value="3/D=1-783"/>
</dbReference>
<dbReference type="PDB" id="6Q8O">
    <property type="method" value="X-ray"/>
    <property type="resolution" value="3.60 A"/>
    <property type="chains" value="3/D=1-783"/>
</dbReference>
<dbReference type="PDB" id="6Q8W">
    <property type="method" value="X-ray"/>
    <property type="resolution" value="3.40 A"/>
    <property type="chains" value="3/D=1-783"/>
</dbReference>
<dbReference type="PDB" id="6Q8X">
    <property type="method" value="X-ray"/>
    <property type="resolution" value="3.51 A"/>
    <property type="chains" value="3/D=1-783"/>
</dbReference>
<dbReference type="PDB" id="6Y11">
    <property type="method" value="X-ray"/>
    <property type="resolution" value="3.11 A"/>
    <property type="chains" value="3/D=1-783"/>
</dbReference>
<dbReference type="PDB" id="6ZIY">
    <property type="method" value="EM"/>
    <property type="resolution" value="4.25 A"/>
    <property type="chains" value="3=1-783"/>
</dbReference>
<dbReference type="PDB" id="6ZJL">
    <property type="method" value="EM"/>
    <property type="resolution" value="4.30 A"/>
    <property type="chains" value="3=1-783"/>
</dbReference>
<dbReference type="PDB" id="6ZJN">
    <property type="method" value="EM"/>
    <property type="resolution" value="6.10 A"/>
    <property type="chains" value="3=1-783"/>
</dbReference>
<dbReference type="PDB" id="6ZJY">
    <property type="method" value="EM"/>
    <property type="resolution" value="5.50 A"/>
    <property type="chains" value="3=1-783"/>
</dbReference>
<dbReference type="PDBsum" id="2FUG"/>
<dbReference type="PDBsum" id="2YBB"/>
<dbReference type="PDBsum" id="3I9V"/>
<dbReference type="PDBsum" id="3IAM"/>
<dbReference type="PDBsum" id="3IAS"/>
<dbReference type="PDBsum" id="3M9S"/>
<dbReference type="PDBsum" id="4HEA"/>
<dbReference type="PDBsum" id="6I0D"/>
<dbReference type="PDBsum" id="6I1P"/>
<dbReference type="PDBsum" id="6Q8O"/>
<dbReference type="PDBsum" id="6Q8W"/>
<dbReference type="PDBsum" id="6Q8X"/>
<dbReference type="PDBsum" id="6Y11"/>
<dbReference type="PDBsum" id="6ZIY"/>
<dbReference type="PDBsum" id="6ZJL"/>
<dbReference type="PDBsum" id="6ZJN"/>
<dbReference type="PDBsum" id="6ZJY"/>
<dbReference type="EMDB" id="EMD-11231"/>
<dbReference type="EMDB" id="EMD-11235"/>
<dbReference type="EMDB" id="EMD-11237"/>
<dbReference type="EMDB" id="EMD-11238"/>
<dbReference type="SMR" id="Q56223"/>
<dbReference type="DIP" id="DIP-59261N"/>
<dbReference type="IntAct" id="Q56223">
    <property type="interactions" value="1"/>
</dbReference>
<dbReference type="TCDB" id="3.D.1.3.1">
    <property type="family name" value="the h+ or na+-translocating nadh dehydrogenase (ndh) family"/>
</dbReference>
<dbReference type="EnsemblBacteria" id="BAD69913">
    <property type="protein sequence ID" value="BAD69913"/>
    <property type="gene ID" value="BAD69913"/>
</dbReference>
<dbReference type="GeneID" id="3168388"/>
<dbReference type="KEGG" id="ttj:TTHA0090"/>
<dbReference type="PATRIC" id="fig|300852.9.peg.88"/>
<dbReference type="eggNOG" id="COG1034">
    <property type="taxonomic scope" value="Bacteria"/>
</dbReference>
<dbReference type="HOGENOM" id="CLU_000422_11_6_0"/>
<dbReference type="PhylomeDB" id="Q56223"/>
<dbReference type="EvolutionaryTrace" id="Q56223"/>
<dbReference type="Proteomes" id="UP000000532">
    <property type="component" value="Chromosome"/>
</dbReference>
<dbReference type="GO" id="GO:0005886">
    <property type="term" value="C:plasma membrane"/>
    <property type="evidence" value="ECO:0007669"/>
    <property type="project" value="UniProtKB-SubCell"/>
</dbReference>
<dbReference type="GO" id="GO:0051537">
    <property type="term" value="F:2 iron, 2 sulfur cluster binding"/>
    <property type="evidence" value="ECO:0007669"/>
    <property type="project" value="UniProtKB-KW"/>
</dbReference>
<dbReference type="GO" id="GO:0051539">
    <property type="term" value="F:4 iron, 4 sulfur cluster binding"/>
    <property type="evidence" value="ECO:0007669"/>
    <property type="project" value="UniProtKB-KW"/>
</dbReference>
<dbReference type="GO" id="GO:0046872">
    <property type="term" value="F:metal ion binding"/>
    <property type="evidence" value="ECO:0007669"/>
    <property type="project" value="UniProtKB-KW"/>
</dbReference>
<dbReference type="GO" id="GO:0043546">
    <property type="term" value="F:molybdopterin cofactor binding"/>
    <property type="evidence" value="ECO:0007669"/>
    <property type="project" value="InterPro"/>
</dbReference>
<dbReference type="GO" id="GO:0008137">
    <property type="term" value="F:NADH dehydrogenase (ubiquinone) activity"/>
    <property type="evidence" value="ECO:0007669"/>
    <property type="project" value="InterPro"/>
</dbReference>
<dbReference type="GO" id="GO:0048038">
    <property type="term" value="F:quinone binding"/>
    <property type="evidence" value="ECO:0007669"/>
    <property type="project" value="UniProtKB-KW"/>
</dbReference>
<dbReference type="GO" id="GO:0042773">
    <property type="term" value="P:ATP synthesis coupled electron transport"/>
    <property type="evidence" value="ECO:0007669"/>
    <property type="project" value="InterPro"/>
</dbReference>
<dbReference type="CDD" id="cd00207">
    <property type="entry name" value="fer2"/>
    <property type="match status" value="1"/>
</dbReference>
<dbReference type="FunFam" id="3.10.20.740:FF:000004">
    <property type="entry name" value="NADH-quinone oxidoreductase"/>
    <property type="match status" value="1"/>
</dbReference>
<dbReference type="Gene3D" id="2.40.40.20">
    <property type="match status" value="1"/>
</dbReference>
<dbReference type="Gene3D" id="3.10.20.740">
    <property type="match status" value="1"/>
</dbReference>
<dbReference type="Gene3D" id="3.30.70.20">
    <property type="match status" value="1"/>
</dbReference>
<dbReference type="Gene3D" id="3.40.50.740">
    <property type="match status" value="2"/>
</dbReference>
<dbReference type="Gene3D" id="2.20.25.90">
    <property type="entry name" value="ADC-like domains"/>
    <property type="match status" value="1"/>
</dbReference>
<dbReference type="InterPro" id="IPR036010">
    <property type="entry name" value="2Fe-2S_ferredoxin-like_sf"/>
</dbReference>
<dbReference type="InterPro" id="IPR001041">
    <property type="entry name" value="2Fe-2S_ferredoxin-type"/>
</dbReference>
<dbReference type="InterPro" id="IPR009010">
    <property type="entry name" value="Asp_de-COase-like_dom_sf"/>
</dbReference>
<dbReference type="InterPro" id="IPR001387">
    <property type="entry name" value="Cro/C1-type_HTH"/>
</dbReference>
<dbReference type="InterPro" id="IPR006657">
    <property type="entry name" value="MoPterin_dinucl-bd_dom"/>
</dbReference>
<dbReference type="InterPro" id="IPR006656">
    <property type="entry name" value="Mopterin_OxRdtase"/>
</dbReference>
<dbReference type="InterPro" id="IPR006963">
    <property type="entry name" value="Mopterin_OxRdtase_4Fe-4S_dom"/>
</dbReference>
<dbReference type="InterPro" id="IPR000283">
    <property type="entry name" value="NADH_UbQ_OxRdtase_75kDa_su_CS"/>
</dbReference>
<dbReference type="InterPro" id="IPR054351">
    <property type="entry name" value="NADH_UbQ_OxRdtase_ferredoxin"/>
</dbReference>
<dbReference type="InterPro" id="IPR010228">
    <property type="entry name" value="NADH_UbQ_OxRdtase_Gsu"/>
</dbReference>
<dbReference type="InterPro" id="IPR019574">
    <property type="entry name" value="NADH_UbQ_OxRdtase_Gsu_4Fe4S-bd"/>
</dbReference>
<dbReference type="InterPro" id="IPR050123">
    <property type="entry name" value="Prok_molybdopt-oxidoreductase"/>
</dbReference>
<dbReference type="NCBIfam" id="TIGR01973">
    <property type="entry name" value="NuoG"/>
    <property type="match status" value="1"/>
</dbReference>
<dbReference type="PANTHER" id="PTHR43105:SF13">
    <property type="entry name" value="NADH-UBIQUINONE OXIDOREDUCTASE 75 KDA SUBUNIT, MITOCHONDRIAL"/>
    <property type="match status" value="1"/>
</dbReference>
<dbReference type="PANTHER" id="PTHR43105">
    <property type="entry name" value="RESPIRATORY NITRATE REDUCTASE"/>
    <property type="match status" value="1"/>
</dbReference>
<dbReference type="Pfam" id="PF13510">
    <property type="entry name" value="Fer2_4"/>
    <property type="match status" value="1"/>
</dbReference>
<dbReference type="Pfam" id="PF22117">
    <property type="entry name" value="Fer4_Nqo3"/>
    <property type="match status" value="1"/>
</dbReference>
<dbReference type="Pfam" id="PF04879">
    <property type="entry name" value="Molybdop_Fe4S4"/>
    <property type="match status" value="1"/>
</dbReference>
<dbReference type="Pfam" id="PF00384">
    <property type="entry name" value="Molybdopterin"/>
    <property type="match status" value="1"/>
</dbReference>
<dbReference type="Pfam" id="PF01568">
    <property type="entry name" value="Molydop_binding"/>
    <property type="match status" value="1"/>
</dbReference>
<dbReference type="Pfam" id="PF10588">
    <property type="entry name" value="NADH-G_4Fe-4S_3"/>
    <property type="match status" value="1"/>
</dbReference>
<dbReference type="SMART" id="SM00926">
    <property type="entry name" value="Molybdop_Fe4S4"/>
    <property type="match status" value="1"/>
</dbReference>
<dbReference type="SMART" id="SM00929">
    <property type="entry name" value="NADH-G_4Fe-4S_3"/>
    <property type="match status" value="1"/>
</dbReference>
<dbReference type="SUPFAM" id="SSF54292">
    <property type="entry name" value="2Fe-2S ferredoxin-like"/>
    <property type="match status" value="1"/>
</dbReference>
<dbReference type="SUPFAM" id="SSF54862">
    <property type="entry name" value="4Fe-4S ferredoxins"/>
    <property type="match status" value="1"/>
</dbReference>
<dbReference type="SUPFAM" id="SSF50692">
    <property type="entry name" value="ADC-like"/>
    <property type="match status" value="1"/>
</dbReference>
<dbReference type="SUPFAM" id="SSF53706">
    <property type="entry name" value="Formate dehydrogenase/DMSO reductase, domains 1-3"/>
    <property type="match status" value="1"/>
</dbReference>
<dbReference type="PROSITE" id="PS51085">
    <property type="entry name" value="2FE2S_FER_2"/>
    <property type="match status" value="1"/>
</dbReference>
<dbReference type="PROSITE" id="PS51839">
    <property type="entry name" value="4FE4S_HC3"/>
    <property type="match status" value="1"/>
</dbReference>
<dbReference type="PROSITE" id="PS51669">
    <property type="entry name" value="4FE4S_MOW_BIS_MGD"/>
    <property type="match status" value="1"/>
</dbReference>
<dbReference type="PROSITE" id="PS00641">
    <property type="entry name" value="COMPLEX1_75K_1"/>
    <property type="match status" value="1"/>
</dbReference>
<dbReference type="PROSITE" id="PS00642">
    <property type="entry name" value="COMPLEX1_75K_2"/>
    <property type="match status" value="1"/>
</dbReference>
<dbReference type="PROSITE" id="PS00643">
    <property type="entry name" value="COMPLEX1_75K_3"/>
    <property type="match status" value="1"/>
</dbReference>
<protein>
    <recommendedName>
        <fullName>NADH-quinone oxidoreductase subunit 3</fullName>
        <ecNumber>7.1.1.-</ecNumber>
    </recommendedName>
    <alternativeName>
        <fullName>NADH dehydrogenase I chain 3</fullName>
    </alternativeName>
    <alternativeName>
        <fullName>NDH-1 subunit 3</fullName>
    </alternativeName>
</protein>
<organism>
    <name type="scientific">Thermus thermophilus (strain ATCC 27634 / DSM 579 / HB8)</name>
    <dbReference type="NCBI Taxonomy" id="300852"/>
    <lineage>
        <taxon>Bacteria</taxon>
        <taxon>Thermotogati</taxon>
        <taxon>Deinococcota</taxon>
        <taxon>Deinococci</taxon>
        <taxon>Thermales</taxon>
        <taxon>Thermaceae</taxon>
        <taxon>Thermus</taxon>
    </lineage>
</organism>
<accession>Q56223</accession>
<accession>Q5SM53</accession>
<feature type="chain" id="PRO_0000118541" description="NADH-quinone oxidoreductase subunit 3">
    <location>
        <begin position="1"/>
        <end position="783"/>
    </location>
</feature>
<feature type="domain" description="2Fe-2S ferredoxin-type" evidence="1">
    <location>
        <begin position="1"/>
        <end position="99"/>
    </location>
</feature>
<feature type="domain" description="4Fe-4S His(Cys)3-ligated-type" evidence="3">
    <location>
        <begin position="99"/>
        <end position="138"/>
    </location>
</feature>
<feature type="domain" description="4Fe-4S Mo/W bis-MGD-type" evidence="2">
    <location>
        <begin position="249"/>
        <end position="305"/>
    </location>
</feature>
<feature type="binding site" evidence="5">
    <location>
        <position position="34"/>
    </location>
    <ligand>
        <name>[2Fe-2S] cluster</name>
        <dbReference type="ChEBI" id="CHEBI:190135"/>
    </ligand>
</feature>
<feature type="binding site" evidence="5">
    <location>
        <position position="45"/>
    </location>
    <ligand>
        <name>[2Fe-2S] cluster</name>
        <dbReference type="ChEBI" id="CHEBI:190135"/>
    </ligand>
</feature>
<feature type="binding site" evidence="5">
    <location>
        <position position="48"/>
    </location>
    <ligand>
        <name>[2Fe-2S] cluster</name>
        <dbReference type="ChEBI" id="CHEBI:190135"/>
    </ligand>
</feature>
<feature type="binding site" evidence="5">
    <location>
        <position position="83"/>
    </location>
    <ligand>
        <name>[2Fe-2S] cluster</name>
        <dbReference type="ChEBI" id="CHEBI:190135"/>
    </ligand>
</feature>
<feature type="binding site" evidence="3 5">
    <location>
        <position position="115"/>
    </location>
    <ligand>
        <name>[4Fe-4S] cluster</name>
        <dbReference type="ChEBI" id="CHEBI:49883"/>
        <label>1</label>
    </ligand>
</feature>
<feature type="binding site" evidence="3">
    <location>
        <position position="119"/>
    </location>
    <ligand>
        <name>[4Fe-4S] cluster</name>
        <dbReference type="ChEBI" id="CHEBI:49883"/>
        <label>1</label>
    </ligand>
</feature>
<feature type="binding site" evidence="3">
    <location>
        <position position="122"/>
    </location>
    <ligand>
        <name>[4Fe-4S] cluster</name>
        <dbReference type="ChEBI" id="CHEBI:49883"/>
        <label>1</label>
    </ligand>
</feature>
<feature type="binding site" evidence="3">
    <location>
        <position position="128"/>
    </location>
    <ligand>
        <name>[4Fe-4S] cluster</name>
        <dbReference type="ChEBI" id="CHEBI:49883"/>
        <label>1</label>
    </ligand>
</feature>
<feature type="binding site" evidence="5">
    <location>
        <position position="181"/>
    </location>
    <ligand>
        <name>[4Fe-4S] cluster</name>
        <dbReference type="ChEBI" id="CHEBI:49883"/>
        <label>2</label>
    </ligand>
</feature>
<feature type="binding site" evidence="5">
    <location>
        <position position="184"/>
    </location>
    <ligand>
        <name>[4Fe-4S] cluster</name>
        <dbReference type="ChEBI" id="CHEBI:49883"/>
        <label>2</label>
    </ligand>
</feature>
<feature type="binding site" evidence="5">
    <location>
        <position position="187"/>
    </location>
    <ligand>
        <name>[4Fe-4S] cluster</name>
        <dbReference type="ChEBI" id="CHEBI:49883"/>
        <label>2</label>
    </ligand>
</feature>
<feature type="binding site" evidence="5">
    <location>
        <position position="230"/>
    </location>
    <ligand>
        <name>[4Fe-4S] cluster</name>
        <dbReference type="ChEBI" id="CHEBI:49883"/>
        <label>2</label>
    </ligand>
</feature>
<feature type="binding site" evidence="5">
    <location>
        <position position="256"/>
    </location>
    <ligand>
        <name>[4Fe-4S] cluster</name>
        <dbReference type="ChEBI" id="CHEBI:49883"/>
        <label>3</label>
    </ligand>
</feature>
<feature type="binding site" evidence="5">
    <location>
        <position position="259"/>
    </location>
    <ligand>
        <name>[4Fe-4S] cluster</name>
        <dbReference type="ChEBI" id="CHEBI:49883"/>
        <label>3</label>
    </ligand>
</feature>
<feature type="binding site" evidence="5">
    <location>
        <position position="263"/>
    </location>
    <ligand>
        <name>[4Fe-4S] cluster</name>
        <dbReference type="ChEBI" id="CHEBI:49883"/>
        <label>3</label>
    </ligand>
</feature>
<feature type="binding site" evidence="5">
    <location>
        <position position="291"/>
    </location>
    <ligand>
        <name>[4Fe-4S] cluster</name>
        <dbReference type="ChEBI" id="CHEBI:49883"/>
        <label>3</label>
    </ligand>
</feature>
<feature type="mutagenesis site" description="Decreases amount and stability of iron-sulfur center 4." evidence="4">
    <original>C</original>
    <variation>A</variation>
    <location>
        <position position="256"/>
    </location>
</feature>
<feature type="mutagenesis site" description="Decreases amount and stability of iron-sulfur center 4." evidence="4">
    <original>C</original>
    <variation>A</variation>
    <location>
        <position position="259"/>
    </location>
</feature>
<feature type="mutagenesis site" description="Decreases amount and stability of iron-sulfur center 4." evidence="4">
    <original>C</original>
    <variation>A</variation>
    <location>
        <position position="263"/>
    </location>
</feature>
<feature type="mutagenesis site" description="Decreases amount and stability of iron-sulfur center 4." evidence="4">
    <original>C</original>
    <variation>A</variation>
    <location>
        <position position="291"/>
    </location>
</feature>
<feature type="sequence conflict" description="In Ref. 1; AAA97944." evidence="7" ref="1">
    <original>G</original>
    <variation>S</variation>
    <location>
        <position position="332"/>
    </location>
</feature>
<feature type="strand" evidence="10">
    <location>
        <begin position="2"/>
        <end position="5"/>
    </location>
</feature>
<feature type="strand" evidence="10">
    <location>
        <begin position="10"/>
        <end position="13"/>
    </location>
</feature>
<feature type="helix" evidence="10">
    <location>
        <begin position="19"/>
        <end position="25"/>
    </location>
</feature>
<feature type="strand" evidence="10">
    <location>
        <begin position="48"/>
        <end position="53"/>
    </location>
</feature>
<feature type="turn" evidence="10">
    <location>
        <begin position="82"/>
        <end position="84"/>
    </location>
</feature>
<feature type="strand" evidence="10">
    <location>
        <begin position="89"/>
        <end position="97"/>
    </location>
</feature>
<feature type="helix" evidence="10">
    <location>
        <begin position="98"/>
        <end position="112"/>
    </location>
</feature>
<feature type="turn" evidence="10">
    <location>
        <begin position="119"/>
        <end position="121"/>
    </location>
</feature>
<feature type="helix" evidence="10">
    <location>
        <begin position="125"/>
        <end position="127"/>
    </location>
</feature>
<feature type="helix" evidence="10">
    <location>
        <begin position="129"/>
        <end position="137"/>
    </location>
</feature>
<feature type="strand" evidence="10">
    <location>
        <begin position="167"/>
        <end position="171"/>
    </location>
</feature>
<feature type="strand" evidence="10">
    <location>
        <begin position="174"/>
        <end position="176"/>
    </location>
</feature>
<feature type="turn" evidence="10">
    <location>
        <begin position="178"/>
        <end position="180"/>
    </location>
</feature>
<feature type="helix" evidence="10">
    <location>
        <begin position="186"/>
        <end position="193"/>
    </location>
</feature>
<feature type="helix" evidence="11">
    <location>
        <begin position="206"/>
        <end position="208"/>
    </location>
</feature>
<feature type="turn" evidence="10">
    <location>
        <begin position="221"/>
        <end position="225"/>
    </location>
</feature>
<feature type="helix" evidence="10">
    <location>
        <begin position="226"/>
        <end position="229"/>
    </location>
</feature>
<feature type="strand" evidence="10">
    <location>
        <begin position="231"/>
        <end position="237"/>
    </location>
</feature>
<feature type="helix" evidence="10">
    <location>
        <begin position="238"/>
        <end position="240"/>
    </location>
</feature>
<feature type="strand" evidence="9">
    <location>
        <begin position="241"/>
        <end position="243"/>
    </location>
</feature>
<feature type="turn" evidence="10">
    <location>
        <begin position="246"/>
        <end position="248"/>
    </location>
</feature>
<feature type="strand" evidence="10">
    <location>
        <begin position="249"/>
        <end position="255"/>
    </location>
</feature>
<feature type="strand" evidence="10">
    <location>
        <begin position="258"/>
        <end position="261"/>
    </location>
</feature>
<feature type="strand" evidence="10">
    <location>
        <begin position="264"/>
        <end position="270"/>
    </location>
</feature>
<feature type="strand" evidence="10">
    <location>
        <begin position="272"/>
        <end position="279"/>
    </location>
</feature>
<feature type="turn" evidence="12">
    <location>
        <begin position="283"/>
        <end position="285"/>
    </location>
</feature>
<feature type="strand" evidence="12">
    <location>
        <begin position="286"/>
        <end position="288"/>
    </location>
</feature>
<feature type="helix" evidence="10">
    <location>
        <begin position="292"/>
        <end position="296"/>
    </location>
</feature>
<feature type="turn" evidence="10">
    <location>
        <begin position="297"/>
        <end position="303"/>
    </location>
</feature>
<feature type="strand" evidence="10">
    <location>
        <begin position="310"/>
        <end position="319"/>
    </location>
</feature>
<feature type="helix" evidence="10">
    <location>
        <begin position="322"/>
        <end position="334"/>
    </location>
</feature>
<feature type="strand" evidence="10">
    <location>
        <begin position="340"/>
        <end position="345"/>
    </location>
</feature>
<feature type="helix" evidence="10">
    <location>
        <begin position="353"/>
        <end position="363"/>
    </location>
</feature>
<feature type="strand" evidence="9">
    <location>
        <begin position="364"/>
        <end position="366"/>
    </location>
</feature>
<feature type="strand" evidence="10">
    <location>
        <begin position="369"/>
        <end position="371"/>
    </location>
</feature>
<feature type="helix" evidence="10">
    <location>
        <begin position="379"/>
        <end position="381"/>
    </location>
</feature>
<feature type="helix" evidence="10">
    <location>
        <begin position="387"/>
        <end position="392"/>
    </location>
</feature>
<feature type="strand" evidence="10">
    <location>
        <begin position="396"/>
        <end position="400"/>
    </location>
</feature>
<feature type="helix" evidence="10">
    <location>
        <begin position="402"/>
        <end position="405"/>
    </location>
</feature>
<feature type="helix" evidence="10">
    <location>
        <begin position="408"/>
        <end position="417"/>
    </location>
</feature>
<feature type="strand" evidence="14">
    <location>
        <begin position="432"/>
        <end position="434"/>
    </location>
</feature>
<feature type="strand" evidence="10">
    <location>
        <begin position="447"/>
        <end position="454"/>
    </location>
</feature>
<feature type="helix" evidence="10">
    <location>
        <begin position="457"/>
        <end position="459"/>
    </location>
</feature>
<feature type="strand" evidence="10">
    <location>
        <begin position="463"/>
        <end position="467"/>
    </location>
</feature>
<feature type="turn" evidence="11">
    <location>
        <begin position="470"/>
        <end position="472"/>
    </location>
</feature>
<feature type="helix" evidence="10">
    <location>
        <begin position="473"/>
        <end position="481"/>
    </location>
</feature>
<feature type="helix" evidence="10">
    <location>
        <begin position="488"/>
        <end position="499"/>
    </location>
</feature>
<feature type="strand" evidence="10">
    <location>
        <begin position="504"/>
        <end position="507"/>
    </location>
</feature>
<feature type="helix" evidence="10">
    <location>
        <begin position="510"/>
        <end position="513"/>
    </location>
</feature>
<feature type="helix" evidence="10">
    <location>
        <begin position="515"/>
        <end position="527"/>
    </location>
</feature>
<feature type="strand" evidence="10">
    <location>
        <begin position="532"/>
        <end position="534"/>
    </location>
</feature>
<feature type="helix" evidence="10">
    <location>
        <begin position="541"/>
        <end position="544"/>
    </location>
</feature>
<feature type="helix" evidence="10">
    <location>
        <begin position="545"/>
        <end position="547"/>
    </location>
</feature>
<feature type="strand" evidence="9">
    <location>
        <begin position="553"/>
        <end position="555"/>
    </location>
</feature>
<feature type="strand" evidence="10">
    <location>
        <begin position="564"/>
        <end position="570"/>
    </location>
</feature>
<feature type="helix" evidence="10">
    <location>
        <begin position="574"/>
        <end position="577"/>
    </location>
</feature>
<feature type="strand" evidence="10">
    <location>
        <begin position="581"/>
        <end position="585"/>
    </location>
</feature>
<feature type="turn" evidence="10">
    <location>
        <begin position="592"/>
        <end position="597"/>
    </location>
</feature>
<feature type="strand" evidence="10">
    <location>
        <begin position="599"/>
        <end position="601"/>
    </location>
</feature>
<feature type="helix" evidence="10">
    <location>
        <begin position="607"/>
        <end position="609"/>
    </location>
</feature>
<feature type="strand" evidence="10">
    <location>
        <begin position="612"/>
        <end position="615"/>
    </location>
</feature>
<feature type="strand" evidence="10">
    <location>
        <begin position="619"/>
        <end position="624"/>
    </location>
</feature>
<feature type="helix" evidence="10">
    <location>
        <begin position="637"/>
        <end position="646"/>
    </location>
</feature>
<feature type="helix" evidence="10">
    <location>
        <begin position="657"/>
        <end position="667"/>
    </location>
</feature>
<feature type="strand" evidence="10">
    <location>
        <begin position="691"/>
        <end position="696"/>
    </location>
</feature>
<feature type="helix" evidence="10">
    <location>
        <begin position="701"/>
        <end position="703"/>
    </location>
</feature>
<feature type="helix" evidence="10">
    <location>
        <begin position="708"/>
        <end position="711"/>
    </location>
</feature>
<feature type="strand" evidence="10">
    <location>
        <begin position="715"/>
        <end position="718"/>
    </location>
</feature>
<feature type="helix" evidence="10">
    <location>
        <begin position="720"/>
        <end position="725"/>
    </location>
</feature>
<feature type="strand" evidence="10">
    <location>
        <begin position="733"/>
        <end position="738"/>
    </location>
</feature>
<feature type="strand" evidence="10">
    <location>
        <begin position="741"/>
        <end position="749"/>
    </location>
</feature>
<feature type="strand" evidence="13">
    <location>
        <begin position="751"/>
        <end position="753"/>
    </location>
</feature>
<feature type="strand" evidence="10">
    <location>
        <begin position="758"/>
        <end position="762"/>
    </location>
</feature>
<feature type="turn" evidence="14">
    <location>
        <begin position="765"/>
        <end position="768"/>
    </location>
</feature>
<feature type="strand" evidence="14">
    <location>
        <begin position="774"/>
        <end position="776"/>
    </location>
</feature>
<name>NQO3_THET8</name>
<comment type="function">
    <text evidence="5 6">NDH-1 shuttles electrons from NADH, via FMN and iron-sulfur (Fe-S) centers, to quinones in the respiratory chain. The immediate electron acceptor for the enzyme in this species is menaquinone. Couples the redox reaction to proton translocation (for every two electrons transferred, four hydrogen ions are translocated across the cytoplasmic membrane), and thus conserves the redox energy in a proton gradient required for the synthesis of ATP.</text>
</comment>
<comment type="catalytic activity">
    <reaction>
        <text>a quinone + NADH + 5 H(+)(in) = a quinol + NAD(+) + 4 H(+)(out)</text>
        <dbReference type="Rhea" id="RHEA:57888"/>
        <dbReference type="ChEBI" id="CHEBI:15378"/>
        <dbReference type="ChEBI" id="CHEBI:24646"/>
        <dbReference type="ChEBI" id="CHEBI:57540"/>
        <dbReference type="ChEBI" id="CHEBI:57945"/>
        <dbReference type="ChEBI" id="CHEBI:132124"/>
    </reaction>
</comment>
<comment type="cofactor">
    <cofactor evidence="5">
        <name>[2Fe-2S] cluster</name>
        <dbReference type="ChEBI" id="CHEBI:190135"/>
    </cofactor>
    <text evidence="5">Binds 1 [2Fe-2S] cluster per subunit. The [2Fe-2S] cluster 1 is referred to as N1b.</text>
</comment>
<comment type="cofactor">
    <cofactor evidence="5">
        <name>[4Fe-4S] cluster</name>
        <dbReference type="ChEBI" id="CHEBI:49883"/>
    </cofactor>
    <text evidence="5">Binds 3 [4Fe-4S] clusters per subunit. The [4Fe-4S] clusters 2, 3, and 4 are referred to as N5, N4, and N7, respectively. The [4Fe-4S] cluster 4 is too far away from the main redox chain to participate in electron transfer but probably confers structural stability.</text>
</comment>
<comment type="subunit">
    <text evidence="5 6">NDH-1 is composed of 15 different subunits, Nqo1 to Nqo15. The complex has a L-shaped structure, with the hydrophobic arm (subunits Nqo7, Nqo8 and Nqo10 to Nqo14) embedded in the membrane and the hydrophilic peripheral arm (subunits Nqo1 to Nqo6, Nqo9 and Nqo15) protruding into the bacterial cytoplasm. The hydrophilic domain contains all the redox centers.</text>
</comment>
<comment type="subcellular location">
    <subcellularLocation>
        <location evidence="8">Cell membrane</location>
        <topology evidence="8">Peripheral membrane protein</topology>
        <orientation evidence="8">Cytoplasmic side</orientation>
    </subcellularLocation>
</comment>
<comment type="domain">
    <text evidence="5">The subunit comprises two main parts, an N-terminal [FeFe]-hydrogenase-like domain (residues 1 to 240) that coordinates clusters 1, 2 and 3, and a domain similar to molybdopterin-containing enzymes (residues 241 to 767) whose first subdomain coordinates cluster 4.</text>
</comment>
<comment type="similarity">
    <text evidence="7">Belongs to the complex I 75 kDa subunit family.</text>
</comment>